<accession>A0AHT7</accession>
<organism>
    <name type="scientific">Listeria welshimeri serovar 6b (strain ATCC 35897 / DSM 20650 / CCUG 15529 / CIP 8149 / NCTC 11857 / SLCC 5334 / V8)</name>
    <dbReference type="NCBI Taxonomy" id="386043"/>
    <lineage>
        <taxon>Bacteria</taxon>
        <taxon>Bacillati</taxon>
        <taxon>Bacillota</taxon>
        <taxon>Bacilli</taxon>
        <taxon>Bacillales</taxon>
        <taxon>Listeriaceae</taxon>
        <taxon>Listeria</taxon>
    </lineage>
</organism>
<name>CBID_LISW6</name>
<evidence type="ECO:0000255" key="1">
    <source>
        <dbReference type="HAMAP-Rule" id="MF_00787"/>
    </source>
</evidence>
<protein>
    <recommendedName>
        <fullName evidence="1">Cobalt-precorrin-5B C(1)-methyltransferase</fullName>
        <ecNumber evidence="1">2.1.1.195</ecNumber>
    </recommendedName>
    <alternativeName>
        <fullName evidence="1">Cobalt-precorrin-6A synthase</fullName>
    </alternativeName>
</protein>
<comment type="function">
    <text evidence="1">Catalyzes the methylation of C-1 in cobalt-precorrin-5B to form cobalt-precorrin-6A.</text>
</comment>
<comment type="catalytic activity">
    <reaction evidence="1">
        <text>Co-precorrin-5B + S-adenosyl-L-methionine = Co-precorrin-6A + S-adenosyl-L-homocysteine</text>
        <dbReference type="Rhea" id="RHEA:26285"/>
        <dbReference type="ChEBI" id="CHEBI:57856"/>
        <dbReference type="ChEBI" id="CHEBI:59789"/>
        <dbReference type="ChEBI" id="CHEBI:60063"/>
        <dbReference type="ChEBI" id="CHEBI:60064"/>
        <dbReference type="EC" id="2.1.1.195"/>
    </reaction>
</comment>
<comment type="pathway">
    <text evidence="1">Cofactor biosynthesis; adenosylcobalamin biosynthesis; cob(II)yrinate a,c-diamide from sirohydrochlorin (anaerobic route): step 6/10.</text>
</comment>
<comment type="similarity">
    <text evidence="1">Belongs to the CbiD family.</text>
</comment>
<dbReference type="EC" id="2.1.1.195" evidence="1"/>
<dbReference type="EMBL" id="AM263198">
    <property type="protein sequence ID" value="CAK20569.1"/>
    <property type="molecule type" value="Genomic_DNA"/>
</dbReference>
<dbReference type="RefSeq" id="WP_011701968.1">
    <property type="nucleotide sequence ID" value="NC_008555.1"/>
</dbReference>
<dbReference type="SMR" id="A0AHT7"/>
<dbReference type="STRING" id="386043.lwe1151"/>
<dbReference type="GeneID" id="61189034"/>
<dbReference type="KEGG" id="lwe:lwe1151"/>
<dbReference type="eggNOG" id="COG1903">
    <property type="taxonomic scope" value="Bacteria"/>
</dbReference>
<dbReference type="HOGENOM" id="CLU_041273_1_0_9"/>
<dbReference type="OrthoDB" id="6439987at2"/>
<dbReference type="UniPathway" id="UPA00148">
    <property type="reaction ID" value="UER00227"/>
</dbReference>
<dbReference type="Proteomes" id="UP000000779">
    <property type="component" value="Chromosome"/>
</dbReference>
<dbReference type="GO" id="GO:0043780">
    <property type="term" value="F:cobalt-precorrin-5B C1-methyltransferase activity"/>
    <property type="evidence" value="ECO:0007669"/>
    <property type="project" value="RHEA"/>
</dbReference>
<dbReference type="GO" id="GO:0019251">
    <property type="term" value="P:anaerobic cobalamin biosynthetic process"/>
    <property type="evidence" value="ECO:0007669"/>
    <property type="project" value="UniProtKB-UniRule"/>
</dbReference>
<dbReference type="GO" id="GO:0032259">
    <property type="term" value="P:methylation"/>
    <property type="evidence" value="ECO:0007669"/>
    <property type="project" value="UniProtKB-KW"/>
</dbReference>
<dbReference type="Gene3D" id="3.30.2110.10">
    <property type="entry name" value="CbiD-like"/>
    <property type="match status" value="1"/>
</dbReference>
<dbReference type="HAMAP" id="MF_00787">
    <property type="entry name" value="CbiD"/>
    <property type="match status" value="1"/>
</dbReference>
<dbReference type="InterPro" id="IPR002748">
    <property type="entry name" value="CbiD"/>
</dbReference>
<dbReference type="InterPro" id="IPR036074">
    <property type="entry name" value="CbiD_sf"/>
</dbReference>
<dbReference type="NCBIfam" id="TIGR00312">
    <property type="entry name" value="cbiD"/>
    <property type="match status" value="1"/>
</dbReference>
<dbReference type="PANTHER" id="PTHR35863">
    <property type="entry name" value="COBALT-PRECORRIN-5B C(1)-METHYLTRANSFERASE"/>
    <property type="match status" value="1"/>
</dbReference>
<dbReference type="PANTHER" id="PTHR35863:SF1">
    <property type="entry name" value="COBALT-PRECORRIN-5B C(1)-METHYLTRANSFERASE"/>
    <property type="match status" value="1"/>
</dbReference>
<dbReference type="Pfam" id="PF01888">
    <property type="entry name" value="CbiD"/>
    <property type="match status" value="1"/>
</dbReference>
<dbReference type="PIRSF" id="PIRSF026782">
    <property type="entry name" value="CbiD"/>
    <property type="match status" value="1"/>
</dbReference>
<dbReference type="SUPFAM" id="SSF111342">
    <property type="entry name" value="CbiD-like"/>
    <property type="match status" value="1"/>
</dbReference>
<proteinExistence type="inferred from homology"/>
<keyword id="KW-0169">Cobalamin biosynthesis</keyword>
<keyword id="KW-0489">Methyltransferase</keyword>
<keyword id="KW-0949">S-adenosyl-L-methionine</keyword>
<keyword id="KW-0808">Transferase</keyword>
<gene>
    <name evidence="1" type="primary">cbiD</name>
    <name type="ordered locus">lwe1151</name>
</gene>
<reference key="1">
    <citation type="journal article" date="2006" name="J. Bacteriol.">
        <title>Whole-genome sequence of Listeria welshimeri reveals common steps in genome reduction with Listeria innocua as compared to Listeria monocytogenes.</title>
        <authorList>
            <person name="Hain T."/>
            <person name="Steinweg C."/>
            <person name="Kuenne C.T."/>
            <person name="Billion A."/>
            <person name="Ghai R."/>
            <person name="Chatterjee S.S."/>
            <person name="Domann E."/>
            <person name="Kaerst U."/>
            <person name="Goesmann A."/>
            <person name="Bekel T."/>
            <person name="Bartels D."/>
            <person name="Kaiser O."/>
            <person name="Meyer F."/>
            <person name="Puehler A."/>
            <person name="Weisshaar B."/>
            <person name="Wehland J."/>
            <person name="Liang C."/>
            <person name="Dandekar T."/>
            <person name="Lampidis R."/>
            <person name="Kreft J."/>
            <person name="Goebel W."/>
            <person name="Chakraborty T."/>
        </authorList>
    </citation>
    <scope>NUCLEOTIDE SEQUENCE [LARGE SCALE GENOMIC DNA]</scope>
    <source>
        <strain>ATCC 35897 / DSM 20650 / CCUG 15529 / CIP 8149 / NCTC 11857 / SLCC 5334 / V8</strain>
    </source>
</reference>
<sequence>MEDFIYYNGKKYRKGYTTGTCAAAAAKACVEMILTQEEVSAVQVTTTGGTILEIPVAHQQFSKKRATAAVQKDGGDDIDATHGMWIFVDVELTNSTEVVLDGGVGIGRATQKGISVAVGEAAINPAPRKNILEAVRKSLGEHRGANILVYAPEGEERAKRTMNSNLGIIGGISILGTTGIVTPMSDEGWKKSLSMELEMKRNQGLEQIILVPGNYGDDFVQHTLGFSSNNIVSMSNFVGYMLKETQRLAFKKVLMVGHFGKLVKVSAGIFTTYSKDADARAEILVANLALLGAPLSLLQEVEKCNTTEAAGELIEEAGYTHVYEVIAQKIKARSERFLKFTKPSVEIDVVTFSTERGLLATTKDIDVLREEWQ</sequence>
<feature type="chain" id="PRO_1000046861" description="Cobalt-precorrin-5B C(1)-methyltransferase">
    <location>
        <begin position="1"/>
        <end position="373"/>
    </location>
</feature>